<dbReference type="EMBL" id="Z68260">
    <property type="protein sequence ID" value="CAA92558.1"/>
    <property type="molecule type" value="Genomic_DNA"/>
</dbReference>
<dbReference type="SMR" id="O20278"/>
<dbReference type="GO" id="GO:0009507">
    <property type="term" value="C:chloroplast"/>
    <property type="evidence" value="ECO:0007669"/>
    <property type="project" value="UniProtKB-SubCell"/>
</dbReference>
<dbReference type="GO" id="GO:0015935">
    <property type="term" value="C:small ribosomal subunit"/>
    <property type="evidence" value="ECO:0007669"/>
    <property type="project" value="InterPro"/>
</dbReference>
<dbReference type="GO" id="GO:0019843">
    <property type="term" value="F:rRNA binding"/>
    <property type="evidence" value="ECO:0007669"/>
    <property type="project" value="UniProtKB-KW"/>
</dbReference>
<dbReference type="GO" id="GO:0003735">
    <property type="term" value="F:structural constituent of ribosome"/>
    <property type="evidence" value="ECO:0007669"/>
    <property type="project" value="InterPro"/>
</dbReference>
<dbReference type="GO" id="GO:0042274">
    <property type="term" value="P:ribosomal small subunit biogenesis"/>
    <property type="evidence" value="ECO:0007669"/>
    <property type="project" value="TreeGrafter"/>
</dbReference>
<dbReference type="GO" id="GO:0006412">
    <property type="term" value="P:translation"/>
    <property type="evidence" value="ECO:0007669"/>
    <property type="project" value="InterPro"/>
</dbReference>
<dbReference type="CDD" id="cd00165">
    <property type="entry name" value="S4"/>
    <property type="match status" value="1"/>
</dbReference>
<dbReference type="FunFam" id="1.10.1050.10:FF:000002">
    <property type="entry name" value="30S ribosomal protein S4, chloroplastic"/>
    <property type="match status" value="1"/>
</dbReference>
<dbReference type="FunFam" id="3.10.290.10:FF:000081">
    <property type="entry name" value="30S ribosomal protein S4, chloroplastic"/>
    <property type="match status" value="1"/>
</dbReference>
<dbReference type="Gene3D" id="1.10.1050.10">
    <property type="entry name" value="Ribosomal Protein S4 Delta 41, Chain A, domain 1"/>
    <property type="match status" value="1"/>
</dbReference>
<dbReference type="Gene3D" id="3.10.290.10">
    <property type="entry name" value="RNA-binding S4 domain"/>
    <property type="match status" value="1"/>
</dbReference>
<dbReference type="HAMAP" id="MF_01306_B">
    <property type="entry name" value="Ribosomal_uS4_B"/>
    <property type="match status" value="1"/>
</dbReference>
<dbReference type="InterPro" id="IPR022801">
    <property type="entry name" value="Ribosomal_uS4"/>
</dbReference>
<dbReference type="InterPro" id="IPR005709">
    <property type="entry name" value="Ribosomal_uS4_bac-type"/>
</dbReference>
<dbReference type="InterPro" id="IPR018079">
    <property type="entry name" value="Ribosomal_uS4_CS"/>
</dbReference>
<dbReference type="InterPro" id="IPR001912">
    <property type="entry name" value="Ribosomal_uS4_N"/>
</dbReference>
<dbReference type="InterPro" id="IPR002942">
    <property type="entry name" value="S4_RNA-bd"/>
</dbReference>
<dbReference type="InterPro" id="IPR036986">
    <property type="entry name" value="S4_RNA-bd_sf"/>
</dbReference>
<dbReference type="NCBIfam" id="NF003717">
    <property type="entry name" value="PRK05327.1"/>
    <property type="match status" value="1"/>
</dbReference>
<dbReference type="NCBIfam" id="TIGR01017">
    <property type="entry name" value="rpsD_bact"/>
    <property type="match status" value="1"/>
</dbReference>
<dbReference type="PANTHER" id="PTHR11831">
    <property type="entry name" value="30S 40S RIBOSOMAL PROTEIN"/>
    <property type="match status" value="1"/>
</dbReference>
<dbReference type="PANTHER" id="PTHR11831:SF4">
    <property type="entry name" value="SMALL RIBOSOMAL SUBUNIT PROTEIN US4M"/>
    <property type="match status" value="1"/>
</dbReference>
<dbReference type="Pfam" id="PF00163">
    <property type="entry name" value="Ribosomal_S4"/>
    <property type="match status" value="1"/>
</dbReference>
<dbReference type="Pfam" id="PF01479">
    <property type="entry name" value="S4"/>
    <property type="match status" value="1"/>
</dbReference>
<dbReference type="SMART" id="SM01390">
    <property type="entry name" value="Ribosomal_S4"/>
    <property type="match status" value="1"/>
</dbReference>
<dbReference type="SMART" id="SM00363">
    <property type="entry name" value="S4"/>
    <property type="match status" value="1"/>
</dbReference>
<dbReference type="SUPFAM" id="SSF55174">
    <property type="entry name" value="Alpha-L RNA-binding motif"/>
    <property type="match status" value="1"/>
</dbReference>
<dbReference type="PROSITE" id="PS00632">
    <property type="entry name" value="RIBOSOMAL_S4"/>
    <property type="match status" value="1"/>
</dbReference>
<dbReference type="PROSITE" id="PS50889">
    <property type="entry name" value="S4"/>
    <property type="match status" value="1"/>
</dbReference>
<name>RR4_PILTE</name>
<accession>O20278</accession>
<reference key="1">
    <citation type="journal article" date="1997" name="Plant Syst. Evol.">
        <title>Phylogenetic analysis of Iridaceae with parsimony and distance methods using the plastid gene rps4.</title>
        <authorList>
            <person name="Souza-Chies T.T."/>
            <person name="Bittar G."/>
            <person name="Nadot S."/>
            <person name="Carter L."/>
            <person name="Besin E."/>
            <person name="Lejeune B.P."/>
        </authorList>
    </citation>
    <scope>NUCLEOTIDE SEQUENCE [GENOMIC DNA]</scope>
</reference>
<protein>
    <recommendedName>
        <fullName evidence="2">Small ribosomal subunit protein uS4c</fullName>
    </recommendedName>
    <alternativeName>
        <fullName>30S ribosomal protein S4, chloroplastic</fullName>
    </alternativeName>
</protein>
<evidence type="ECO:0000250" key="1"/>
<evidence type="ECO:0000305" key="2"/>
<keyword id="KW-0150">Chloroplast</keyword>
<keyword id="KW-0934">Plastid</keyword>
<keyword id="KW-0687">Ribonucleoprotein</keyword>
<keyword id="KW-0689">Ribosomal protein</keyword>
<keyword id="KW-0694">RNA-binding</keyword>
<keyword id="KW-0699">rRNA-binding</keyword>
<sequence>RFKKIRRLGALPGLTSKRPRSGSDLKNQLRSGKRSQYRIRLEEKQKLRFHYGLTERQLLKYVHIAGKAKGSTGQILLQLLEMRLDNILFRLGMASTIPGARQLVNHRHILVNGRIVDIPSYRCKPRDIITTKNKQRSKALIQNFIASYPHQEELPNHLTIDPFQYKGLVNQIIDSKWIGLKINELLVVEYYSRQT</sequence>
<feature type="chain" id="PRO_0000132651" description="Small ribosomal subunit protein uS4c">
    <location>
        <begin position="1" status="less than"/>
        <end position="195" status="greater than"/>
    </location>
</feature>
<feature type="domain" description="S4 RNA-binding">
    <location>
        <begin position="82"/>
        <end position="143"/>
    </location>
</feature>
<feature type="non-terminal residue">
    <location>
        <position position="1"/>
    </location>
</feature>
<feature type="non-terminal residue">
    <location>
        <position position="195"/>
    </location>
</feature>
<gene>
    <name type="primary">rps4</name>
</gene>
<organism>
    <name type="scientific">Pillansia templemannii</name>
    <dbReference type="NCBI Taxonomy" id="58971"/>
    <lineage>
        <taxon>Eukaryota</taxon>
        <taxon>Viridiplantae</taxon>
        <taxon>Streptophyta</taxon>
        <taxon>Embryophyta</taxon>
        <taxon>Tracheophyta</taxon>
        <taxon>Spermatophyta</taxon>
        <taxon>Magnoliopsida</taxon>
        <taxon>Liliopsida</taxon>
        <taxon>Asparagales</taxon>
        <taxon>Iridaceae</taxon>
        <taxon>Crocoideae</taxon>
        <taxon>Watsonieae</taxon>
        <taxon>Pillansia</taxon>
    </lineage>
</organism>
<proteinExistence type="inferred from homology"/>
<comment type="function">
    <text evidence="1">One of the primary rRNA binding proteins, it binds directly to 16S rRNA where it nucleates assembly of the body of the 30S subunit.</text>
</comment>
<comment type="function">
    <text evidence="1">With S5 and S12 plays an important role in translational accuracy.</text>
</comment>
<comment type="subunit">
    <text evidence="1">Part of the 30S ribosomal subunit. Contacts protein S5. The interaction surface between S4 and S5 is involved in control of translational fidelity (By similarity).</text>
</comment>
<comment type="subcellular location">
    <subcellularLocation>
        <location>Plastid</location>
        <location>Chloroplast</location>
    </subcellularLocation>
</comment>
<comment type="similarity">
    <text evidence="2">Belongs to the universal ribosomal protein uS4 family.</text>
</comment>
<geneLocation type="chloroplast"/>